<feature type="signal peptide" evidence="4">
    <location>
        <begin position="1"/>
        <end position="29"/>
    </location>
</feature>
<feature type="propeptide" id="PRO_0000043393" evidence="4">
    <location>
        <begin position="30"/>
        <end position="48"/>
    </location>
</feature>
<feature type="chain" id="PRO_0000043394" description="Interleukin-15">
    <location>
        <begin position="49"/>
        <end position="162"/>
    </location>
</feature>
<feature type="glycosylation site" description="N-linked (GlcNAc...) asparagine" evidence="4">
    <location>
        <position position="108"/>
    </location>
</feature>
<feature type="glycosylation site" description="N-linked (GlcNAc...) asparagine" evidence="4">
    <location>
        <position position="119"/>
    </location>
</feature>
<feature type="glycosylation site" description="N-linked (GlcNAc...) asparagine" evidence="4">
    <location>
        <position position="127"/>
    </location>
</feature>
<feature type="glycosylation site" description="N-linked (GlcNAc...) asparagine" evidence="4">
    <location>
        <position position="143"/>
    </location>
</feature>
<feature type="disulfide bond" evidence="1">
    <location>
        <begin position="83"/>
        <end position="133"/>
    </location>
</feature>
<feature type="disulfide bond" evidence="1">
    <location>
        <begin position="90"/>
        <end position="136"/>
    </location>
</feature>
<gene>
    <name type="primary">IL15</name>
</gene>
<keyword id="KW-0202">Cytokine</keyword>
<keyword id="KW-1015">Disulfide bond</keyword>
<keyword id="KW-0325">Glycoprotein</keyword>
<keyword id="KW-1185">Reference proteome</keyword>
<keyword id="KW-0964">Secreted</keyword>
<keyword id="KW-0732">Signal</keyword>
<comment type="function">
    <text evidence="2 3">Cytokine that plays a major role in the development of inflammatory and protective immune responses to microbial invaders and parasites by modulating immune cells of both the innate and adaptive immune systems. Stimulates the proliferation of natural killer cells, T-cells and B-cells and promotes the secretion of several cytokines. In monocytes, induces the production of IL8 and monocyte chemotactic protein 1/CCL2, two chemokines that attract neutrophils and monocytes respectively to sites of infection. Unlike most cytokines, which are secreted in soluble form, IL15 is expressed in association with its high affinity IL15RA on the surface of IL15-producing cells and delivers signals to target cells that express IL2RB and IL2RG receptor subunits. Binding to its receptor triggers the phosphorylation of JAK1 and JAK3 and the recruitment and subsequent phosphorylation of signal transducer and activator of transcription-3/STAT3 and STAT5 (By similarity). In mast cells, induces the rapid tyrosine phosphorylation of STAT6 and thereby controls mast cell survival and release of cytokines such as IL4 (By similarity).</text>
</comment>
<comment type="subcellular location">
    <subcellularLocation>
        <location>Secreted</location>
    </subcellularLocation>
</comment>
<comment type="tissue specificity">
    <text evidence="5">Expressed in many tissues including heart, spleen, lung, liver, muscle and kidney (at mRNA level). Expressed in many tissues including heart, spleen, lung, liver, muscle and kidney (at protein level).</text>
</comment>
<comment type="similarity">
    <text evidence="6">Belongs to the IL-15/IL-21 family.</text>
</comment>
<name>IL15_RABIT</name>
<evidence type="ECO:0000250" key="1"/>
<evidence type="ECO:0000250" key="2">
    <source>
        <dbReference type="UniProtKB" id="P40933"/>
    </source>
</evidence>
<evidence type="ECO:0000250" key="3">
    <source>
        <dbReference type="UniProtKB" id="P48346"/>
    </source>
</evidence>
<evidence type="ECO:0000255" key="4"/>
<evidence type="ECO:0000269" key="5">
    <source>
    </source>
</evidence>
<evidence type="ECO:0000305" key="6"/>
<dbReference type="EMBL" id="DQ157452">
    <property type="protein sequence ID" value="AAZ82803.1"/>
    <property type="molecule type" value="mRNA"/>
</dbReference>
<dbReference type="RefSeq" id="NP_001075685.1">
    <property type="nucleotide sequence ID" value="NM_001082216.2"/>
</dbReference>
<dbReference type="RefSeq" id="XP_017202736.1">
    <property type="nucleotide sequence ID" value="XM_017347247.1"/>
</dbReference>
<dbReference type="RefSeq" id="XP_069935578.1">
    <property type="nucleotide sequence ID" value="XM_070079477.1"/>
</dbReference>
<dbReference type="RefSeq" id="XP_069935579.1">
    <property type="nucleotide sequence ID" value="XM_070079478.1"/>
</dbReference>
<dbReference type="RefSeq" id="XP_069935580.1">
    <property type="nucleotide sequence ID" value="XM_070079479.1"/>
</dbReference>
<dbReference type="RefSeq" id="XP_069935581.1">
    <property type="nucleotide sequence ID" value="XM_070079480.1"/>
</dbReference>
<dbReference type="RefSeq" id="XP_069935583.1">
    <property type="nucleotide sequence ID" value="XM_070079482.1"/>
</dbReference>
<dbReference type="SMR" id="Q3Y5G8"/>
<dbReference type="FunCoup" id="Q3Y5G8">
    <property type="interactions" value="87"/>
</dbReference>
<dbReference type="STRING" id="9986.ENSOCUP00000007620"/>
<dbReference type="GlyCosmos" id="Q3Y5G8">
    <property type="glycosylation" value="4 sites, No reported glycans"/>
</dbReference>
<dbReference type="PaxDb" id="9986-ENSOCUP00000007620"/>
<dbReference type="Ensembl" id="ENSOCUT00000008824.3">
    <property type="protein sequence ID" value="ENSOCUP00000007620.2"/>
    <property type="gene ID" value="ENSOCUG00000008827.3"/>
</dbReference>
<dbReference type="GeneID" id="100009017"/>
<dbReference type="KEGG" id="ocu:100009017"/>
<dbReference type="CTD" id="3600"/>
<dbReference type="eggNOG" id="ENOG502SCMF">
    <property type="taxonomic scope" value="Eukaryota"/>
</dbReference>
<dbReference type="GeneTree" id="ENSGT00390000016264"/>
<dbReference type="HOGENOM" id="CLU_135111_0_0_1"/>
<dbReference type="InParanoid" id="Q3Y5G8"/>
<dbReference type="OMA" id="FVWGCIS"/>
<dbReference type="OrthoDB" id="8905762at2759"/>
<dbReference type="TreeFam" id="TF336199"/>
<dbReference type="Proteomes" id="UP000001811">
    <property type="component" value="Chromosome 15"/>
</dbReference>
<dbReference type="Bgee" id="ENSOCUG00000008827">
    <property type="expression patterns" value="Expressed in heart and 15 other cell types or tissues"/>
</dbReference>
<dbReference type="GO" id="GO:0005829">
    <property type="term" value="C:cytosol"/>
    <property type="evidence" value="ECO:0007669"/>
    <property type="project" value="Ensembl"/>
</dbReference>
<dbReference type="GO" id="GO:0005615">
    <property type="term" value="C:extracellular space"/>
    <property type="evidence" value="ECO:0007669"/>
    <property type="project" value="UniProtKB-KW"/>
</dbReference>
<dbReference type="GO" id="GO:0016607">
    <property type="term" value="C:nuclear speck"/>
    <property type="evidence" value="ECO:0007669"/>
    <property type="project" value="Ensembl"/>
</dbReference>
<dbReference type="GO" id="GO:0005125">
    <property type="term" value="F:cytokine activity"/>
    <property type="evidence" value="ECO:0007669"/>
    <property type="project" value="UniProtKB-KW"/>
</dbReference>
<dbReference type="GO" id="GO:0005126">
    <property type="term" value="F:cytokine receptor binding"/>
    <property type="evidence" value="ECO:0007669"/>
    <property type="project" value="InterPro"/>
</dbReference>
<dbReference type="GO" id="GO:0006955">
    <property type="term" value="P:immune response"/>
    <property type="evidence" value="ECO:0007669"/>
    <property type="project" value="InterPro"/>
</dbReference>
<dbReference type="GO" id="GO:0035723">
    <property type="term" value="P:interleukin-15-mediated signaling pathway"/>
    <property type="evidence" value="ECO:0000250"/>
    <property type="project" value="UniProtKB"/>
</dbReference>
<dbReference type="GO" id="GO:0030225">
    <property type="term" value="P:macrophage differentiation"/>
    <property type="evidence" value="ECO:0007669"/>
    <property type="project" value="Ensembl"/>
</dbReference>
<dbReference type="GO" id="GO:0042119">
    <property type="term" value="P:neutrophil activation"/>
    <property type="evidence" value="ECO:0000250"/>
    <property type="project" value="UniProtKB"/>
</dbReference>
<dbReference type="GO" id="GO:0050778">
    <property type="term" value="P:positive regulation of immune response"/>
    <property type="evidence" value="ECO:0007669"/>
    <property type="project" value="TreeGrafter"/>
</dbReference>
<dbReference type="GO" id="GO:0032740">
    <property type="term" value="P:positive regulation of interleukin-17 production"/>
    <property type="evidence" value="ECO:0007669"/>
    <property type="project" value="Ensembl"/>
</dbReference>
<dbReference type="GO" id="GO:0050731">
    <property type="term" value="P:positive regulation of peptidyl-tyrosine phosphorylation"/>
    <property type="evidence" value="ECO:0000250"/>
    <property type="project" value="UniProtKB"/>
</dbReference>
<dbReference type="GO" id="GO:0050766">
    <property type="term" value="P:positive regulation of phagocytosis"/>
    <property type="evidence" value="ECO:0000250"/>
    <property type="project" value="UniProtKB"/>
</dbReference>
<dbReference type="GO" id="GO:0042102">
    <property type="term" value="P:positive regulation of T cell proliferation"/>
    <property type="evidence" value="ECO:0007669"/>
    <property type="project" value="TreeGrafter"/>
</dbReference>
<dbReference type="FunFam" id="1.20.1250.70:FF:000001">
    <property type="entry name" value="Interleukin"/>
    <property type="match status" value="1"/>
</dbReference>
<dbReference type="Gene3D" id="1.20.1250.70">
    <property type="entry name" value="Interleukin-15/Interleukin-21"/>
    <property type="match status" value="1"/>
</dbReference>
<dbReference type="InterPro" id="IPR009079">
    <property type="entry name" value="4_helix_cytokine-like_core"/>
</dbReference>
<dbReference type="InterPro" id="IPR020439">
    <property type="entry name" value="IL-15"/>
</dbReference>
<dbReference type="InterPro" id="IPR003443">
    <property type="entry name" value="IL-15/IL-21_fam"/>
</dbReference>
<dbReference type="InterPro" id="IPR020466">
    <property type="entry name" value="IL-15_mml"/>
</dbReference>
<dbReference type="PANTHER" id="PTHR14356:SF3">
    <property type="entry name" value="INTERLEUKIN-15"/>
    <property type="match status" value="1"/>
</dbReference>
<dbReference type="PANTHER" id="PTHR14356">
    <property type="entry name" value="INTERLEUKIN-15-RELATED"/>
    <property type="match status" value="1"/>
</dbReference>
<dbReference type="Pfam" id="PF02372">
    <property type="entry name" value="IL15"/>
    <property type="match status" value="1"/>
</dbReference>
<dbReference type="PRINTS" id="PR01947">
    <property type="entry name" value="INTLKN15MAML"/>
</dbReference>
<dbReference type="PRINTS" id="PR01930">
    <property type="entry name" value="INTRLEUKIN15"/>
</dbReference>
<dbReference type="SUPFAM" id="SSF47266">
    <property type="entry name" value="4-helical cytokines"/>
    <property type="match status" value="1"/>
</dbReference>
<accession>Q3Y5G8</accession>
<protein>
    <recommendedName>
        <fullName>Interleukin-15</fullName>
        <shortName>IL-15</shortName>
    </recommendedName>
</protein>
<proteinExistence type="evidence at protein level"/>
<reference key="1">
    <citation type="journal article" date="2005" name="Vet. Immunol. Immunopathol.">
        <title>Cloning and expression of rabbit interleukin-15.</title>
        <authorList>
            <person name="Xiong C."/>
            <person name="Hixson P.M."/>
            <person name="Mendoza L.H."/>
            <person name="Smith C.W."/>
        </authorList>
    </citation>
    <scope>NUCLEOTIDE SEQUENCE [MRNA]</scope>
    <scope>TISSUE SPECIFICITY</scope>
</reference>
<sequence>MRISKPYLRSTSIQCYLCLLLNSHFLAEAGIHVFIFGCISAGLPKTEANWHDVISDLKRIEDLIKSIHIDATLYTESDAHPNCKVTAMKCFLLELRVISHESRNMDINETVQNLIILANTSLSSKGNVTESGCKECEELEEKNITEFLQSFIHIVQMFINSP</sequence>
<organism>
    <name type="scientific">Oryctolagus cuniculus</name>
    <name type="common">Rabbit</name>
    <dbReference type="NCBI Taxonomy" id="9986"/>
    <lineage>
        <taxon>Eukaryota</taxon>
        <taxon>Metazoa</taxon>
        <taxon>Chordata</taxon>
        <taxon>Craniata</taxon>
        <taxon>Vertebrata</taxon>
        <taxon>Euteleostomi</taxon>
        <taxon>Mammalia</taxon>
        <taxon>Eutheria</taxon>
        <taxon>Euarchontoglires</taxon>
        <taxon>Glires</taxon>
        <taxon>Lagomorpha</taxon>
        <taxon>Leporidae</taxon>
        <taxon>Oryctolagus</taxon>
    </lineage>
</organism>